<dbReference type="SMR" id="Q9PS09"/>
<dbReference type="GO" id="GO:0005576">
    <property type="term" value="C:extracellular region"/>
    <property type="evidence" value="ECO:0007669"/>
    <property type="project" value="UniProtKB-SubCell"/>
</dbReference>
<dbReference type="GO" id="GO:0015459">
    <property type="term" value="F:potassium channel regulator activity"/>
    <property type="evidence" value="ECO:0007669"/>
    <property type="project" value="UniProtKB-KW"/>
</dbReference>
<dbReference type="GO" id="GO:0090729">
    <property type="term" value="F:toxin activity"/>
    <property type="evidence" value="ECO:0007669"/>
    <property type="project" value="UniProtKB-KW"/>
</dbReference>
<dbReference type="Gene3D" id="2.10.60.10">
    <property type="entry name" value="CD59"/>
    <property type="match status" value="1"/>
</dbReference>
<dbReference type="InterPro" id="IPR045860">
    <property type="entry name" value="Snake_toxin-like_sf"/>
</dbReference>
<feature type="chain" id="PRO_0000093655" description="Dendrotoxin B" evidence="2">
    <location>
        <begin position="1"/>
        <end position="30" status="greater than"/>
    </location>
</feature>
<feature type="disulfide bond" evidence="1">
    <location>
        <begin position="3"/>
        <end position="22"/>
    </location>
</feature>
<feature type="non-terminal residue">
    <location>
        <position position="30"/>
    </location>
</feature>
<sequence length="30" mass="3431">MICYSHKTPQPSATIGCEEKTCYKKSVRKL</sequence>
<evidence type="ECO:0000250" key="1">
    <source>
        <dbReference type="UniProtKB" id="P0C1Z0"/>
    </source>
</evidence>
<evidence type="ECO:0000269" key="2">
    <source>
    </source>
</evidence>
<evidence type="ECO:0000305" key="3"/>
<comment type="function">
    <text evidence="2">Blocks voltage-gated potassium channels (Kv). This is the slowly inactivating phase of potassium efflux which is blocked by this toxin.</text>
</comment>
<comment type="subcellular location">
    <subcellularLocation>
        <location evidence="2">Secreted</location>
    </subcellularLocation>
</comment>
<comment type="tissue specificity">
    <text evidence="3">Expressed by the venom gland.</text>
</comment>
<comment type="PTM">
    <text evidence="1">Contains 4 disulfide bonds.</text>
</comment>
<comment type="similarity">
    <text evidence="3">Belongs to the three-finger toxin family. Short-chain subfamily. Orphan group XI sub-subfamily.</text>
</comment>
<protein>
    <recommendedName>
        <fullName>Dendrotoxin B</fullName>
        <shortName>DTX-B</shortName>
    </recommendedName>
</protein>
<reference key="1">
    <citation type="journal article" date="1992" name="Neurochem. Int.">
        <title>Purification and partial characterization of K+ channel blockers from the venom of Dendroaspis angusticeps.</title>
        <authorList>
            <person name="Chaki S."/>
            <person name="Muramatsu M."/>
            <person name="Ushiyama Y."/>
            <person name="Otomo S."/>
        </authorList>
    </citation>
    <scope>PROTEIN SEQUENCE</scope>
    <scope>FUNCTION</scope>
    <scope>SUBCELLULAR LOCATION</scope>
    <source>
        <tissue>Venom</tissue>
    </source>
</reference>
<accession>Q9PS09</accession>
<organism>
    <name type="scientific">Dendroaspis angusticeps</name>
    <name type="common">Eastern green mamba</name>
    <name type="synonym">Naja angusticeps</name>
    <dbReference type="NCBI Taxonomy" id="8618"/>
    <lineage>
        <taxon>Eukaryota</taxon>
        <taxon>Metazoa</taxon>
        <taxon>Chordata</taxon>
        <taxon>Craniata</taxon>
        <taxon>Vertebrata</taxon>
        <taxon>Euteleostomi</taxon>
        <taxon>Lepidosauria</taxon>
        <taxon>Squamata</taxon>
        <taxon>Bifurcata</taxon>
        <taxon>Unidentata</taxon>
        <taxon>Episquamata</taxon>
        <taxon>Toxicofera</taxon>
        <taxon>Serpentes</taxon>
        <taxon>Colubroidea</taxon>
        <taxon>Elapidae</taxon>
        <taxon>Elapinae</taxon>
        <taxon>Dendroaspis</taxon>
    </lineage>
</organism>
<proteinExistence type="evidence at protein level"/>
<name>3SOBB_DENAN</name>
<keyword id="KW-0903">Direct protein sequencing</keyword>
<keyword id="KW-1015">Disulfide bond</keyword>
<keyword id="KW-0872">Ion channel impairing toxin</keyword>
<keyword id="KW-0528">Neurotoxin</keyword>
<keyword id="KW-0632">Potassium channel impairing toxin</keyword>
<keyword id="KW-0964">Secreted</keyword>
<keyword id="KW-0800">Toxin</keyword>
<keyword id="KW-1220">Voltage-gated potassium channel impairing toxin</keyword>